<sequence length="601" mass="67333">MAMRTHYCGLVTEALMGQTVTLCGWVNRRRDHGGVIFIDVRDREGYVQVVCDPDRAATFAVAENLRNEFCVQVTGLVRARPEGTTNDQLKSGKIEVLCHELKVLNPSVTPPFLLDDDNLSETTRLTHRVLDLRRPAMQRNMMLRYKVTMETRKFLDANGFIDIETPMLGKSTPEGARDYLVPSRVHDGSFFALPQSPQLFKQLLMVAGYDRYYQIVKCFRDEDLRADRQPEFTQIDIETSFLAEEEIREMFEGMIRNVFRNAAGIDLPVFPTMTYGDAMFKYGSDKPDLRVKLEFTELTELMKRVEFKVFSNAATMQGGRVVALRVPGGGAEGGLSRGEIDAYQEFVKIYGAKGLAYIKVNDAAAGREGLQSPIVKNLDDASLAEIIARTGARNGDILFFGADKEKIVNDAIGALRVKIGHSAFGKKSGLFDDRWAPLWVVDFPMFEFDEEGQRWSAVHHPFTAPKDGHEDLMDTAPEKCIAKAYDMVLNGIEMGGGSVRIHREEVQSKVFRALKISAEDAQLKFGFLLDALQYGAPPHGGIAIGLDRLVMLMTGAESIRDVIAFPKTQRAQDLLTQAPSPVDEKQLRELHIRLRNVQQPA</sequence>
<proteinExistence type="inferred from homology"/>
<gene>
    <name evidence="1" type="primary">aspS</name>
    <name type="ordered locus">Vapar_4122</name>
</gene>
<evidence type="ECO:0000255" key="1">
    <source>
        <dbReference type="HAMAP-Rule" id="MF_00044"/>
    </source>
</evidence>
<comment type="function">
    <text evidence="1">Aspartyl-tRNA synthetase with relaxed tRNA specificity since it is able to aspartylate not only its cognate tRNA(Asp) but also tRNA(Asn). Reaction proceeds in two steps: L-aspartate is first activated by ATP to form Asp-AMP and then transferred to the acceptor end of tRNA(Asp/Asn).</text>
</comment>
<comment type="catalytic activity">
    <reaction evidence="1">
        <text>tRNA(Asx) + L-aspartate + ATP = L-aspartyl-tRNA(Asx) + AMP + diphosphate</text>
        <dbReference type="Rhea" id="RHEA:18349"/>
        <dbReference type="Rhea" id="RHEA-COMP:9710"/>
        <dbReference type="Rhea" id="RHEA-COMP:9711"/>
        <dbReference type="ChEBI" id="CHEBI:29991"/>
        <dbReference type="ChEBI" id="CHEBI:30616"/>
        <dbReference type="ChEBI" id="CHEBI:33019"/>
        <dbReference type="ChEBI" id="CHEBI:78442"/>
        <dbReference type="ChEBI" id="CHEBI:78516"/>
        <dbReference type="ChEBI" id="CHEBI:456215"/>
        <dbReference type="EC" id="6.1.1.23"/>
    </reaction>
</comment>
<comment type="subunit">
    <text evidence="1">Homodimer.</text>
</comment>
<comment type="subcellular location">
    <subcellularLocation>
        <location evidence="1">Cytoplasm</location>
    </subcellularLocation>
</comment>
<comment type="similarity">
    <text evidence="1">Belongs to the class-II aminoacyl-tRNA synthetase family. Type 1 subfamily.</text>
</comment>
<dbReference type="EC" id="6.1.1.23" evidence="1"/>
<dbReference type="EMBL" id="CP001635">
    <property type="protein sequence ID" value="ACS20735.1"/>
    <property type="molecule type" value="Genomic_DNA"/>
</dbReference>
<dbReference type="SMR" id="C5CWX8"/>
<dbReference type="STRING" id="543728.Vapar_4122"/>
<dbReference type="KEGG" id="vap:Vapar_4122"/>
<dbReference type="eggNOG" id="COG0173">
    <property type="taxonomic scope" value="Bacteria"/>
</dbReference>
<dbReference type="HOGENOM" id="CLU_014330_3_2_4"/>
<dbReference type="OrthoDB" id="9802326at2"/>
<dbReference type="GO" id="GO:0005737">
    <property type="term" value="C:cytoplasm"/>
    <property type="evidence" value="ECO:0007669"/>
    <property type="project" value="UniProtKB-SubCell"/>
</dbReference>
<dbReference type="GO" id="GO:0004815">
    <property type="term" value="F:aspartate-tRNA ligase activity"/>
    <property type="evidence" value="ECO:0007669"/>
    <property type="project" value="UniProtKB-UniRule"/>
</dbReference>
<dbReference type="GO" id="GO:0050560">
    <property type="term" value="F:aspartate-tRNA(Asn) ligase activity"/>
    <property type="evidence" value="ECO:0007669"/>
    <property type="project" value="UniProtKB-EC"/>
</dbReference>
<dbReference type="GO" id="GO:0005524">
    <property type="term" value="F:ATP binding"/>
    <property type="evidence" value="ECO:0007669"/>
    <property type="project" value="UniProtKB-UniRule"/>
</dbReference>
<dbReference type="GO" id="GO:0003676">
    <property type="term" value="F:nucleic acid binding"/>
    <property type="evidence" value="ECO:0007669"/>
    <property type="project" value="InterPro"/>
</dbReference>
<dbReference type="GO" id="GO:0006422">
    <property type="term" value="P:aspartyl-tRNA aminoacylation"/>
    <property type="evidence" value="ECO:0007669"/>
    <property type="project" value="UniProtKB-UniRule"/>
</dbReference>
<dbReference type="CDD" id="cd00777">
    <property type="entry name" value="AspRS_core"/>
    <property type="match status" value="1"/>
</dbReference>
<dbReference type="CDD" id="cd04317">
    <property type="entry name" value="EcAspRS_like_N"/>
    <property type="match status" value="1"/>
</dbReference>
<dbReference type="Gene3D" id="3.30.930.10">
    <property type="entry name" value="Bira Bifunctional Protein, Domain 2"/>
    <property type="match status" value="1"/>
</dbReference>
<dbReference type="Gene3D" id="3.30.1360.30">
    <property type="entry name" value="GAD-like domain"/>
    <property type="match status" value="1"/>
</dbReference>
<dbReference type="Gene3D" id="2.40.50.140">
    <property type="entry name" value="Nucleic acid-binding proteins"/>
    <property type="match status" value="1"/>
</dbReference>
<dbReference type="HAMAP" id="MF_00044">
    <property type="entry name" value="Asp_tRNA_synth_type1"/>
    <property type="match status" value="1"/>
</dbReference>
<dbReference type="InterPro" id="IPR004364">
    <property type="entry name" value="Aa-tRNA-synt_II"/>
</dbReference>
<dbReference type="InterPro" id="IPR006195">
    <property type="entry name" value="aa-tRNA-synth_II"/>
</dbReference>
<dbReference type="InterPro" id="IPR045864">
    <property type="entry name" value="aa-tRNA-synth_II/BPL/LPL"/>
</dbReference>
<dbReference type="InterPro" id="IPR004524">
    <property type="entry name" value="Asp-tRNA-ligase_1"/>
</dbReference>
<dbReference type="InterPro" id="IPR047089">
    <property type="entry name" value="Asp-tRNA-ligase_1_N"/>
</dbReference>
<dbReference type="InterPro" id="IPR002312">
    <property type="entry name" value="Asp/Asn-tRNA-synth_IIb"/>
</dbReference>
<dbReference type="InterPro" id="IPR047090">
    <property type="entry name" value="AspRS_core"/>
</dbReference>
<dbReference type="InterPro" id="IPR004115">
    <property type="entry name" value="GAD-like_sf"/>
</dbReference>
<dbReference type="InterPro" id="IPR029351">
    <property type="entry name" value="GAD_dom"/>
</dbReference>
<dbReference type="InterPro" id="IPR012340">
    <property type="entry name" value="NA-bd_OB-fold"/>
</dbReference>
<dbReference type="InterPro" id="IPR004365">
    <property type="entry name" value="NA-bd_OB_tRNA"/>
</dbReference>
<dbReference type="NCBIfam" id="TIGR00459">
    <property type="entry name" value="aspS_bact"/>
    <property type="match status" value="1"/>
</dbReference>
<dbReference type="NCBIfam" id="NF001750">
    <property type="entry name" value="PRK00476.1"/>
    <property type="match status" value="1"/>
</dbReference>
<dbReference type="PANTHER" id="PTHR22594:SF5">
    <property type="entry name" value="ASPARTATE--TRNA LIGASE, MITOCHONDRIAL"/>
    <property type="match status" value="1"/>
</dbReference>
<dbReference type="PANTHER" id="PTHR22594">
    <property type="entry name" value="ASPARTYL/LYSYL-TRNA SYNTHETASE"/>
    <property type="match status" value="1"/>
</dbReference>
<dbReference type="Pfam" id="PF02938">
    <property type="entry name" value="GAD"/>
    <property type="match status" value="1"/>
</dbReference>
<dbReference type="Pfam" id="PF00152">
    <property type="entry name" value="tRNA-synt_2"/>
    <property type="match status" value="1"/>
</dbReference>
<dbReference type="Pfam" id="PF01336">
    <property type="entry name" value="tRNA_anti-codon"/>
    <property type="match status" value="1"/>
</dbReference>
<dbReference type="PRINTS" id="PR01042">
    <property type="entry name" value="TRNASYNTHASP"/>
</dbReference>
<dbReference type="SUPFAM" id="SSF55681">
    <property type="entry name" value="Class II aaRS and biotin synthetases"/>
    <property type="match status" value="1"/>
</dbReference>
<dbReference type="SUPFAM" id="SSF55261">
    <property type="entry name" value="GAD domain-like"/>
    <property type="match status" value="1"/>
</dbReference>
<dbReference type="SUPFAM" id="SSF50249">
    <property type="entry name" value="Nucleic acid-binding proteins"/>
    <property type="match status" value="1"/>
</dbReference>
<dbReference type="PROSITE" id="PS50862">
    <property type="entry name" value="AA_TRNA_LIGASE_II"/>
    <property type="match status" value="1"/>
</dbReference>
<organism>
    <name type="scientific">Variovorax paradoxus (strain S110)</name>
    <dbReference type="NCBI Taxonomy" id="543728"/>
    <lineage>
        <taxon>Bacteria</taxon>
        <taxon>Pseudomonadati</taxon>
        <taxon>Pseudomonadota</taxon>
        <taxon>Betaproteobacteria</taxon>
        <taxon>Burkholderiales</taxon>
        <taxon>Comamonadaceae</taxon>
        <taxon>Variovorax</taxon>
    </lineage>
</organism>
<feature type="chain" id="PRO_1000202171" description="Aspartate--tRNA(Asp/Asn) ligase">
    <location>
        <begin position="1"/>
        <end position="601"/>
    </location>
</feature>
<feature type="region of interest" description="Aspartate" evidence="1">
    <location>
        <begin position="198"/>
        <end position="201"/>
    </location>
</feature>
<feature type="binding site" evidence="1">
    <location>
        <position position="174"/>
    </location>
    <ligand>
        <name>L-aspartate</name>
        <dbReference type="ChEBI" id="CHEBI:29991"/>
    </ligand>
</feature>
<feature type="binding site" evidence="1">
    <location>
        <begin position="220"/>
        <end position="222"/>
    </location>
    <ligand>
        <name>ATP</name>
        <dbReference type="ChEBI" id="CHEBI:30616"/>
    </ligand>
</feature>
<feature type="binding site" evidence="1">
    <location>
        <position position="220"/>
    </location>
    <ligand>
        <name>L-aspartate</name>
        <dbReference type="ChEBI" id="CHEBI:29991"/>
    </ligand>
</feature>
<feature type="binding site" evidence="1">
    <location>
        <position position="229"/>
    </location>
    <ligand>
        <name>ATP</name>
        <dbReference type="ChEBI" id="CHEBI:30616"/>
    </ligand>
</feature>
<feature type="binding site" evidence="1">
    <location>
        <position position="459"/>
    </location>
    <ligand>
        <name>L-aspartate</name>
        <dbReference type="ChEBI" id="CHEBI:29991"/>
    </ligand>
</feature>
<feature type="binding site" evidence="1">
    <location>
        <position position="493"/>
    </location>
    <ligand>
        <name>ATP</name>
        <dbReference type="ChEBI" id="CHEBI:30616"/>
    </ligand>
</feature>
<feature type="binding site" evidence="1">
    <location>
        <position position="500"/>
    </location>
    <ligand>
        <name>L-aspartate</name>
        <dbReference type="ChEBI" id="CHEBI:29991"/>
    </ligand>
</feature>
<feature type="binding site" evidence="1">
    <location>
        <begin position="545"/>
        <end position="548"/>
    </location>
    <ligand>
        <name>ATP</name>
        <dbReference type="ChEBI" id="CHEBI:30616"/>
    </ligand>
</feature>
<feature type="site" description="Important for tRNA non-discrimination" evidence="1">
    <location>
        <position position="32"/>
    </location>
</feature>
<feature type="site" description="Important for tRNA non-discrimination" evidence="1">
    <location>
        <position position="83"/>
    </location>
</feature>
<protein>
    <recommendedName>
        <fullName evidence="1">Aspartate--tRNA(Asp/Asn) ligase</fullName>
        <ecNumber evidence="1">6.1.1.23</ecNumber>
    </recommendedName>
    <alternativeName>
        <fullName evidence="1">Aspartyl-tRNA synthetase</fullName>
        <shortName evidence="1">AspRS</shortName>
    </alternativeName>
    <alternativeName>
        <fullName evidence="1">Non-discriminating aspartyl-tRNA synthetase</fullName>
        <shortName evidence="1">ND-AspRS</shortName>
    </alternativeName>
</protein>
<accession>C5CWX8</accession>
<keyword id="KW-0030">Aminoacyl-tRNA synthetase</keyword>
<keyword id="KW-0067">ATP-binding</keyword>
<keyword id="KW-0963">Cytoplasm</keyword>
<keyword id="KW-0436">Ligase</keyword>
<keyword id="KW-0547">Nucleotide-binding</keyword>
<keyword id="KW-0648">Protein biosynthesis</keyword>
<reference key="1">
    <citation type="journal article" date="2011" name="J. Bacteriol.">
        <title>Complete genome sequence of the metabolically versatile plant growth-promoting endophyte, Variovorax paradoxus S110.</title>
        <authorList>
            <person name="Han J.I."/>
            <person name="Choi H.K."/>
            <person name="Lee S.W."/>
            <person name="Orwin P.M."/>
            <person name="Kim J."/>
            <person name="Laroe S.L."/>
            <person name="Kim T.G."/>
            <person name="O'Neil J."/>
            <person name="Leadbetter J.R."/>
            <person name="Lee S.Y."/>
            <person name="Hur C.G."/>
            <person name="Spain J.C."/>
            <person name="Ovchinnikova G."/>
            <person name="Goodwin L."/>
            <person name="Han C."/>
        </authorList>
    </citation>
    <scope>NUCLEOTIDE SEQUENCE [LARGE SCALE GENOMIC DNA]</scope>
    <source>
        <strain>S110</strain>
    </source>
</reference>
<name>SYDND_VARPS</name>